<gene>
    <name evidence="1" type="primary">cobD</name>
    <name type="ordered locus">MMP0951</name>
</gene>
<sequence length="306" mass="34145">MINPIYLILADFFDRYIGEPPEKVHPVVFIGKLISFFENVFKSTNSVNKNRDLLFGFLNVVLVLAIVFFMAFEIEQAINSISNSYIRISLYSIILSFSIGHKSLIEFSKSPIKFIVNNDLESAKKSVQCIVSRNTNELDKKHVLSASIESASENITDSIIAPLIYAAIFGLPGAFLYRAVNTFDAMIGYKSEKYLYYGKTAAYLDDILNFIPSRIAGMLLIISAPFYGGNVKSALLGYFNEGSKTPSPNSGYTMATLANSLSMELEKIGYYKLGKGEITVEKALNSLKAVDYSVLLFLIIYMILFM</sequence>
<evidence type="ECO:0000255" key="1">
    <source>
        <dbReference type="HAMAP-Rule" id="MF_00024"/>
    </source>
</evidence>
<feature type="chain" id="PRO_1000057213" description="Probable cobalamin biosynthesis protein CobD">
    <location>
        <begin position="1"/>
        <end position="306"/>
    </location>
</feature>
<feature type="transmembrane region" description="Helical" evidence="1">
    <location>
        <begin position="54"/>
        <end position="74"/>
    </location>
</feature>
<feature type="transmembrane region" description="Helical" evidence="1">
    <location>
        <begin position="88"/>
        <end position="108"/>
    </location>
</feature>
<feature type="transmembrane region" description="Helical" evidence="1">
    <location>
        <begin position="155"/>
        <end position="175"/>
    </location>
</feature>
<feature type="transmembrane region" description="Helical" evidence="1">
    <location>
        <begin position="207"/>
        <end position="227"/>
    </location>
</feature>
<feature type="transmembrane region" description="Helical" evidence="1">
    <location>
        <begin position="286"/>
        <end position="306"/>
    </location>
</feature>
<name>COBD_METMP</name>
<organism>
    <name type="scientific">Methanococcus maripaludis (strain DSM 14266 / JCM 13030 / NBRC 101832 / S2 / LL)</name>
    <dbReference type="NCBI Taxonomy" id="267377"/>
    <lineage>
        <taxon>Archaea</taxon>
        <taxon>Methanobacteriati</taxon>
        <taxon>Methanobacteriota</taxon>
        <taxon>Methanomada group</taxon>
        <taxon>Methanococci</taxon>
        <taxon>Methanococcales</taxon>
        <taxon>Methanococcaceae</taxon>
        <taxon>Methanococcus</taxon>
    </lineage>
</organism>
<protein>
    <recommendedName>
        <fullName evidence="1">Probable cobalamin biosynthesis protein CobD</fullName>
    </recommendedName>
</protein>
<keyword id="KW-1003">Cell membrane</keyword>
<keyword id="KW-0169">Cobalamin biosynthesis</keyword>
<keyword id="KW-0472">Membrane</keyword>
<keyword id="KW-1185">Reference proteome</keyword>
<keyword id="KW-0812">Transmembrane</keyword>
<keyword id="KW-1133">Transmembrane helix</keyword>
<dbReference type="EMBL" id="BX950229">
    <property type="protein sequence ID" value="CAF30507.1"/>
    <property type="molecule type" value="Genomic_DNA"/>
</dbReference>
<dbReference type="RefSeq" id="WP_011170895.1">
    <property type="nucleotide sequence ID" value="NC_005791.1"/>
</dbReference>
<dbReference type="STRING" id="267377.MMP0951"/>
<dbReference type="EnsemblBacteria" id="CAF30507">
    <property type="protein sequence ID" value="CAF30507"/>
    <property type="gene ID" value="MMP0951"/>
</dbReference>
<dbReference type="GeneID" id="2761508"/>
<dbReference type="KEGG" id="mmp:MMP0951"/>
<dbReference type="PATRIC" id="fig|267377.15.peg.979"/>
<dbReference type="eggNOG" id="arCOG04274">
    <property type="taxonomic scope" value="Archaea"/>
</dbReference>
<dbReference type="HOGENOM" id="CLU_054212_0_2_2"/>
<dbReference type="OrthoDB" id="46105at2157"/>
<dbReference type="UniPathway" id="UPA00148"/>
<dbReference type="Proteomes" id="UP000000590">
    <property type="component" value="Chromosome"/>
</dbReference>
<dbReference type="GO" id="GO:0005886">
    <property type="term" value="C:plasma membrane"/>
    <property type="evidence" value="ECO:0007669"/>
    <property type="project" value="UniProtKB-SubCell"/>
</dbReference>
<dbReference type="GO" id="GO:0015420">
    <property type="term" value="F:ABC-type vitamin B12 transporter activity"/>
    <property type="evidence" value="ECO:0007669"/>
    <property type="project" value="UniProtKB-UniRule"/>
</dbReference>
<dbReference type="GO" id="GO:0048472">
    <property type="term" value="F:threonine-phosphate decarboxylase activity"/>
    <property type="evidence" value="ECO:0007669"/>
    <property type="project" value="InterPro"/>
</dbReference>
<dbReference type="GO" id="GO:0009236">
    <property type="term" value="P:cobalamin biosynthetic process"/>
    <property type="evidence" value="ECO:0007669"/>
    <property type="project" value="UniProtKB-UniRule"/>
</dbReference>
<dbReference type="HAMAP" id="MF_00024">
    <property type="entry name" value="CobD_CbiB"/>
    <property type="match status" value="1"/>
</dbReference>
<dbReference type="InterPro" id="IPR004485">
    <property type="entry name" value="Cobalamin_biosynth_CobD/CbiB"/>
</dbReference>
<dbReference type="NCBIfam" id="TIGR00380">
    <property type="entry name" value="cobal_cbiB"/>
    <property type="match status" value="1"/>
</dbReference>
<dbReference type="PANTHER" id="PTHR34308">
    <property type="entry name" value="COBALAMIN BIOSYNTHESIS PROTEIN CBIB"/>
    <property type="match status" value="1"/>
</dbReference>
<dbReference type="PANTHER" id="PTHR34308:SF1">
    <property type="entry name" value="COBALAMIN BIOSYNTHESIS PROTEIN CBIB"/>
    <property type="match status" value="1"/>
</dbReference>
<dbReference type="Pfam" id="PF03186">
    <property type="entry name" value="CobD_Cbib"/>
    <property type="match status" value="1"/>
</dbReference>
<accession>Q6LYN9</accession>
<reference key="1">
    <citation type="journal article" date="2004" name="J. Bacteriol.">
        <title>Complete genome sequence of the genetically tractable hydrogenotrophic methanogen Methanococcus maripaludis.</title>
        <authorList>
            <person name="Hendrickson E.L."/>
            <person name="Kaul R."/>
            <person name="Zhou Y."/>
            <person name="Bovee D."/>
            <person name="Chapman P."/>
            <person name="Chung J."/>
            <person name="Conway de Macario E."/>
            <person name="Dodsworth J.A."/>
            <person name="Gillett W."/>
            <person name="Graham D.E."/>
            <person name="Hackett M."/>
            <person name="Haydock A.K."/>
            <person name="Kang A."/>
            <person name="Land M.L."/>
            <person name="Levy R."/>
            <person name="Lie T.J."/>
            <person name="Major T.A."/>
            <person name="Moore B.C."/>
            <person name="Porat I."/>
            <person name="Palmeiri A."/>
            <person name="Rouse G."/>
            <person name="Saenphimmachak C."/>
            <person name="Soell D."/>
            <person name="Van Dien S."/>
            <person name="Wang T."/>
            <person name="Whitman W.B."/>
            <person name="Xia Q."/>
            <person name="Zhang Y."/>
            <person name="Larimer F.W."/>
            <person name="Olson M.V."/>
            <person name="Leigh J.A."/>
        </authorList>
    </citation>
    <scope>NUCLEOTIDE SEQUENCE [LARGE SCALE GENOMIC DNA]</scope>
    <source>
        <strain>DSM 14266 / JCM 13030 / NBRC 101832 / S2 / LL</strain>
    </source>
</reference>
<comment type="function">
    <text evidence="1">Converts cobyric acid to cobinamide by the addition of aminopropanol on the F carboxylic group.</text>
</comment>
<comment type="pathway">
    <text evidence="1">Cofactor biosynthesis; adenosylcobalamin biosynthesis.</text>
</comment>
<comment type="subcellular location">
    <subcellularLocation>
        <location evidence="1">Cell membrane</location>
        <topology evidence="1">Multi-pass membrane protein</topology>
    </subcellularLocation>
</comment>
<comment type="similarity">
    <text evidence="1">Belongs to the CobD/CbiB family.</text>
</comment>
<proteinExistence type="inferred from homology"/>